<comment type="function">
    <text evidence="1 2 3">Part of the ABC transporter complex TauABC involved in taurine import. Responsible for energy coupling to the transport system.</text>
</comment>
<comment type="catalytic activity">
    <reaction evidence="1">
        <text>taurine(out) + ATP + H2O = taurine(in) + ADP + phosphate + H(+)</text>
        <dbReference type="Rhea" id="RHEA:14613"/>
        <dbReference type="ChEBI" id="CHEBI:15377"/>
        <dbReference type="ChEBI" id="CHEBI:15378"/>
        <dbReference type="ChEBI" id="CHEBI:30616"/>
        <dbReference type="ChEBI" id="CHEBI:43474"/>
        <dbReference type="ChEBI" id="CHEBI:456216"/>
        <dbReference type="ChEBI" id="CHEBI:507393"/>
        <dbReference type="EC" id="7.6.2.7"/>
    </reaction>
</comment>
<comment type="subunit">
    <text evidence="1">The complex is composed of two ATP-binding proteins (TauB), two transmembrane proteins (TauC) and a solute-binding protein (TauA).</text>
</comment>
<comment type="subcellular location">
    <subcellularLocation>
        <location evidence="1">Cell inner membrane</location>
        <topology evidence="1">Peripheral membrane protein</topology>
    </subcellularLocation>
</comment>
<comment type="induction">
    <text evidence="3">Regulated by CysB in response to sulfate starvation.</text>
</comment>
<comment type="similarity">
    <text evidence="1">Belongs to the ABC transporter superfamily. Taurine importer (TC 3.A.1.17.1) family.</text>
</comment>
<dbReference type="EC" id="7.6.2.7" evidence="1"/>
<dbReference type="EMBL" id="D85613">
    <property type="protein sequence ID" value="BAA12839.1"/>
    <property type="molecule type" value="Genomic_DNA"/>
</dbReference>
<dbReference type="EMBL" id="U73857">
    <property type="protein sequence ID" value="AAB18089.1"/>
    <property type="molecule type" value="Genomic_DNA"/>
</dbReference>
<dbReference type="EMBL" id="U00096">
    <property type="protein sequence ID" value="AAC73469.1"/>
    <property type="molecule type" value="Genomic_DNA"/>
</dbReference>
<dbReference type="EMBL" id="AP009048">
    <property type="protein sequence ID" value="BAE76147.1"/>
    <property type="molecule type" value="Genomic_DNA"/>
</dbReference>
<dbReference type="PIR" id="S78605">
    <property type="entry name" value="F64764"/>
</dbReference>
<dbReference type="RefSeq" id="NP_414900.1">
    <property type="nucleotide sequence ID" value="NC_000913.3"/>
</dbReference>
<dbReference type="RefSeq" id="WP_000939375.1">
    <property type="nucleotide sequence ID" value="NZ_SSZK01000009.1"/>
</dbReference>
<dbReference type="SMR" id="Q47538"/>
<dbReference type="BioGRID" id="4261090">
    <property type="interactions" value="12"/>
</dbReference>
<dbReference type="ComplexPortal" id="CPX-4312">
    <property type="entry name" value="Taurine ABC transporter complex"/>
</dbReference>
<dbReference type="FunCoup" id="Q47538">
    <property type="interactions" value="533"/>
</dbReference>
<dbReference type="IntAct" id="Q47538">
    <property type="interactions" value="4"/>
</dbReference>
<dbReference type="STRING" id="511145.b0366"/>
<dbReference type="TCDB" id="3.A.1.17.1">
    <property type="family name" value="the atp-binding cassette (abc) superfamily"/>
</dbReference>
<dbReference type="PaxDb" id="511145-b0366"/>
<dbReference type="EnsemblBacteria" id="AAC73469">
    <property type="protein sequence ID" value="AAC73469"/>
    <property type="gene ID" value="b0366"/>
</dbReference>
<dbReference type="GeneID" id="93777092"/>
<dbReference type="GeneID" id="945027"/>
<dbReference type="KEGG" id="ecj:JW0358"/>
<dbReference type="KEGG" id="eco:b0366"/>
<dbReference type="PATRIC" id="fig|1411691.4.peg.1913"/>
<dbReference type="EchoBASE" id="EB3084"/>
<dbReference type="eggNOG" id="COG4525">
    <property type="taxonomic scope" value="Bacteria"/>
</dbReference>
<dbReference type="HOGENOM" id="CLU_000604_1_22_6"/>
<dbReference type="InParanoid" id="Q47538"/>
<dbReference type="OMA" id="VEIFGWK"/>
<dbReference type="OrthoDB" id="9802264at2"/>
<dbReference type="PhylomeDB" id="Q47538"/>
<dbReference type="BioCyc" id="EcoCyc:TAUB-MONOMER"/>
<dbReference type="BioCyc" id="MetaCyc:TAUB-MONOMER"/>
<dbReference type="PRO" id="PR:Q47538"/>
<dbReference type="Proteomes" id="UP000000625">
    <property type="component" value="Chromosome"/>
</dbReference>
<dbReference type="GO" id="GO:0055052">
    <property type="term" value="C:ATP-binding cassette (ABC) transporter complex, substrate-binding subunit-containing"/>
    <property type="evidence" value="ECO:0000303"/>
    <property type="project" value="ComplexPortal"/>
</dbReference>
<dbReference type="GO" id="GO:0016020">
    <property type="term" value="C:membrane"/>
    <property type="evidence" value="ECO:0000303"/>
    <property type="project" value="ComplexPortal"/>
</dbReference>
<dbReference type="GO" id="GO:0015411">
    <property type="term" value="F:ABC-type taurine transporter transporter activity"/>
    <property type="evidence" value="ECO:0007669"/>
    <property type="project" value="UniProtKB-EC"/>
</dbReference>
<dbReference type="GO" id="GO:0005524">
    <property type="term" value="F:ATP binding"/>
    <property type="evidence" value="ECO:0000255"/>
    <property type="project" value="EcoCyc"/>
</dbReference>
<dbReference type="GO" id="GO:0016887">
    <property type="term" value="F:ATP hydrolysis activity"/>
    <property type="evidence" value="ECO:0007669"/>
    <property type="project" value="InterPro"/>
</dbReference>
<dbReference type="GO" id="GO:0010438">
    <property type="term" value="P:cellular response to sulfur starvation"/>
    <property type="evidence" value="ECO:0000270"/>
    <property type="project" value="EcoCyc"/>
</dbReference>
<dbReference type="GO" id="GO:0015734">
    <property type="term" value="P:taurine transmembrane transport"/>
    <property type="evidence" value="ECO:0000269"/>
    <property type="project" value="EcoCyc"/>
</dbReference>
<dbReference type="CDD" id="cd03293">
    <property type="entry name" value="ABC_NrtD_SsuB_transporters"/>
    <property type="match status" value="1"/>
</dbReference>
<dbReference type="FunFam" id="3.40.50.300:FF:000653">
    <property type="entry name" value="Aliphatic sulfonates import ATP-binding protein SsuB"/>
    <property type="match status" value="1"/>
</dbReference>
<dbReference type="Gene3D" id="3.40.50.300">
    <property type="entry name" value="P-loop containing nucleotide triphosphate hydrolases"/>
    <property type="match status" value="1"/>
</dbReference>
<dbReference type="InterPro" id="IPR003593">
    <property type="entry name" value="AAA+_ATPase"/>
</dbReference>
<dbReference type="InterPro" id="IPR003439">
    <property type="entry name" value="ABC_transporter-like_ATP-bd"/>
</dbReference>
<dbReference type="InterPro" id="IPR017871">
    <property type="entry name" value="ABC_transporter-like_CS"/>
</dbReference>
<dbReference type="InterPro" id="IPR050166">
    <property type="entry name" value="ABC_transporter_ATP-bind"/>
</dbReference>
<dbReference type="InterPro" id="IPR027417">
    <property type="entry name" value="P-loop_NTPase"/>
</dbReference>
<dbReference type="NCBIfam" id="NF008421">
    <property type="entry name" value="PRK11248.1"/>
    <property type="match status" value="1"/>
</dbReference>
<dbReference type="PANTHER" id="PTHR42788:SF18">
    <property type="entry name" value="TAURINE IMPORT ATP-BINDING PROTEIN TAUB"/>
    <property type="match status" value="1"/>
</dbReference>
<dbReference type="PANTHER" id="PTHR42788">
    <property type="entry name" value="TAURINE IMPORT ATP-BINDING PROTEIN-RELATED"/>
    <property type="match status" value="1"/>
</dbReference>
<dbReference type="Pfam" id="PF00005">
    <property type="entry name" value="ABC_tran"/>
    <property type="match status" value="1"/>
</dbReference>
<dbReference type="SMART" id="SM00382">
    <property type="entry name" value="AAA"/>
    <property type="match status" value="1"/>
</dbReference>
<dbReference type="SUPFAM" id="SSF52540">
    <property type="entry name" value="P-loop containing nucleoside triphosphate hydrolases"/>
    <property type="match status" value="1"/>
</dbReference>
<dbReference type="PROSITE" id="PS00211">
    <property type="entry name" value="ABC_TRANSPORTER_1"/>
    <property type="match status" value="1"/>
</dbReference>
<dbReference type="PROSITE" id="PS50893">
    <property type="entry name" value="ABC_TRANSPORTER_2"/>
    <property type="match status" value="1"/>
</dbReference>
<dbReference type="PROSITE" id="PS51250">
    <property type="entry name" value="TAUB"/>
    <property type="match status" value="1"/>
</dbReference>
<protein>
    <recommendedName>
        <fullName evidence="1">Taurine import ATP-binding protein TauB</fullName>
        <ecNumber evidence="1">7.6.2.7</ecNumber>
    </recommendedName>
</protein>
<organism>
    <name type="scientific">Escherichia coli (strain K12)</name>
    <dbReference type="NCBI Taxonomy" id="83333"/>
    <lineage>
        <taxon>Bacteria</taxon>
        <taxon>Pseudomonadati</taxon>
        <taxon>Pseudomonadota</taxon>
        <taxon>Gammaproteobacteria</taxon>
        <taxon>Enterobacterales</taxon>
        <taxon>Enterobacteriaceae</taxon>
        <taxon>Escherichia</taxon>
    </lineage>
</organism>
<gene>
    <name evidence="1" type="primary">tauB</name>
    <name type="synonym">ssiB</name>
    <name type="synonym">yaiQ</name>
    <name type="ordered locus">b0366</name>
    <name type="ordered locus">JW0358</name>
</gene>
<proteinExistence type="evidence at transcript level"/>
<feature type="chain" id="PRO_0000093007" description="Taurine import ATP-binding protein TauB">
    <location>
        <begin position="1"/>
        <end position="255"/>
    </location>
</feature>
<feature type="domain" description="ABC transporter" evidence="1">
    <location>
        <begin position="2"/>
        <end position="229"/>
    </location>
</feature>
<feature type="binding site" evidence="1">
    <location>
        <begin position="34"/>
        <end position="41"/>
    </location>
    <ligand>
        <name>ATP</name>
        <dbReference type="ChEBI" id="CHEBI:30616"/>
    </ligand>
</feature>
<accession>Q47538</accession>
<accession>Q2MC59</accession>
<reference key="1">
    <citation type="journal article" date="1996" name="J. Bacteriol.">
        <title>Identification of sulfate starvation-regulated genes in Escherichia coli: a gene cluster involved in the utilization of taurine as a sulfur source.</title>
        <authorList>
            <person name="van der Ploeg J.R."/>
            <person name="Weiss M.A."/>
            <person name="Saller E."/>
            <person name="Nashimoto H."/>
            <person name="Saito N."/>
            <person name="Kertesz M.A."/>
            <person name="Leisinger T."/>
        </authorList>
    </citation>
    <scope>NUCLEOTIDE SEQUENCE [GENOMIC DNA]</scope>
    <scope>FUNCTION</scope>
    <scope>INDUCTION</scope>
    <source>
        <strain>K12</strain>
    </source>
</reference>
<reference key="2">
    <citation type="submission" date="1997-01" db="EMBL/GenBank/DDBJ databases">
        <title>Sequence of minutes 4-25 of Escherichia coli.</title>
        <authorList>
            <person name="Chung E."/>
            <person name="Allen E."/>
            <person name="Araujo R."/>
            <person name="Aparicio A.M."/>
            <person name="Davis K."/>
            <person name="Duncan M."/>
            <person name="Federspiel N."/>
            <person name="Hyman R."/>
            <person name="Kalman S."/>
            <person name="Komp C."/>
            <person name="Kurdi O."/>
            <person name="Lew H."/>
            <person name="Lin D."/>
            <person name="Namath A."/>
            <person name="Oefner P."/>
            <person name="Roberts D."/>
            <person name="Schramm S."/>
            <person name="Davis R.W."/>
        </authorList>
    </citation>
    <scope>NUCLEOTIDE SEQUENCE [LARGE SCALE GENOMIC DNA]</scope>
    <source>
        <strain>K12 / MG1655 / ATCC 47076</strain>
    </source>
</reference>
<reference key="3">
    <citation type="journal article" date="1997" name="Science">
        <title>The complete genome sequence of Escherichia coli K-12.</title>
        <authorList>
            <person name="Blattner F.R."/>
            <person name="Plunkett G. III"/>
            <person name="Bloch C.A."/>
            <person name="Perna N.T."/>
            <person name="Burland V."/>
            <person name="Riley M."/>
            <person name="Collado-Vides J."/>
            <person name="Glasner J.D."/>
            <person name="Rode C.K."/>
            <person name="Mayhew G.F."/>
            <person name="Gregor J."/>
            <person name="Davis N.W."/>
            <person name="Kirkpatrick H.A."/>
            <person name="Goeden M.A."/>
            <person name="Rose D.J."/>
            <person name="Mau B."/>
            <person name="Shao Y."/>
        </authorList>
    </citation>
    <scope>NUCLEOTIDE SEQUENCE [LARGE SCALE GENOMIC DNA]</scope>
    <source>
        <strain>K12 / MG1655 / ATCC 47076</strain>
    </source>
</reference>
<reference key="4">
    <citation type="journal article" date="2006" name="Mol. Syst. Biol.">
        <title>Highly accurate genome sequences of Escherichia coli K-12 strains MG1655 and W3110.</title>
        <authorList>
            <person name="Hayashi K."/>
            <person name="Morooka N."/>
            <person name="Yamamoto Y."/>
            <person name="Fujita K."/>
            <person name="Isono K."/>
            <person name="Choi S."/>
            <person name="Ohtsubo E."/>
            <person name="Baba T."/>
            <person name="Wanner B.L."/>
            <person name="Mori H."/>
            <person name="Horiuchi T."/>
        </authorList>
    </citation>
    <scope>NUCLEOTIDE SEQUENCE [LARGE SCALE GENOMIC DNA]</scope>
    <source>
        <strain>K12 / W3110 / ATCC 27325 / DSM 5911</strain>
    </source>
</reference>
<reference key="5">
    <citation type="journal article" date="2000" name="J. Bacteriol.">
        <title>Deletion analysis of the Escherichia coli taurine and alkanesulfonate transport systems.</title>
        <authorList>
            <person name="Eichhorn E."/>
            <person name="van der Ploeg J.R."/>
            <person name="Leisinger T."/>
        </authorList>
    </citation>
    <scope>FUNCTION</scope>
</reference>
<keyword id="KW-0067">ATP-binding</keyword>
<keyword id="KW-0997">Cell inner membrane</keyword>
<keyword id="KW-1003">Cell membrane</keyword>
<keyword id="KW-0472">Membrane</keyword>
<keyword id="KW-0547">Nucleotide-binding</keyword>
<keyword id="KW-1185">Reference proteome</keyword>
<keyword id="KW-1278">Translocase</keyword>
<keyword id="KW-0813">Transport</keyword>
<sequence>MLQISHLYADYGGKPALEDINLTLESGELLVVLGPSGCGKTTLLNLIAGFVPYQHGSIQLAGKRIEGPGAERGVVFQNEGLLPWRNVQDNVAFGLQLAGIEKMQRLEIAHQMLKKVGLEGAEKRYIWQLSGGQRQRVGIARALAANPQLLLLDEPFGALDAFTRDQMQTLLLKLWQETGKQVLLITHDIEEAVFMATELVLLSSGPGRVLERLPLNFARRFVAGESSRSIKSDPQFIAMREYVLSRVFEQREAFS</sequence>
<evidence type="ECO:0000255" key="1">
    <source>
        <dbReference type="HAMAP-Rule" id="MF_01714"/>
    </source>
</evidence>
<evidence type="ECO:0000269" key="2">
    <source>
    </source>
</evidence>
<evidence type="ECO:0000269" key="3">
    <source>
    </source>
</evidence>
<name>TAUB_ECOLI</name>